<evidence type="ECO:0000255" key="1">
    <source>
        <dbReference type="HAMAP-Rule" id="MF_00215"/>
    </source>
</evidence>
<protein>
    <recommendedName>
        <fullName evidence="1">Pantothenate kinase</fullName>
        <ecNumber evidence="1">2.7.1.33</ecNumber>
    </recommendedName>
    <alternativeName>
        <fullName evidence="1">Pantothenic acid kinase</fullName>
    </alternativeName>
</protein>
<organism>
    <name type="scientific">Salmonella schwarzengrund (strain CVM19633)</name>
    <dbReference type="NCBI Taxonomy" id="439843"/>
    <lineage>
        <taxon>Bacteria</taxon>
        <taxon>Pseudomonadati</taxon>
        <taxon>Pseudomonadota</taxon>
        <taxon>Gammaproteobacteria</taxon>
        <taxon>Enterobacterales</taxon>
        <taxon>Enterobacteriaceae</taxon>
        <taxon>Salmonella</taxon>
    </lineage>
</organism>
<gene>
    <name evidence="1" type="primary">coaA</name>
    <name type="ordered locus">SeSA_A4350</name>
</gene>
<reference key="1">
    <citation type="journal article" date="2011" name="J. Bacteriol.">
        <title>Comparative genomics of 28 Salmonella enterica isolates: evidence for CRISPR-mediated adaptive sublineage evolution.</title>
        <authorList>
            <person name="Fricke W.F."/>
            <person name="Mammel M.K."/>
            <person name="McDermott P.F."/>
            <person name="Tartera C."/>
            <person name="White D.G."/>
            <person name="Leclerc J.E."/>
            <person name="Ravel J."/>
            <person name="Cebula T.A."/>
        </authorList>
    </citation>
    <scope>NUCLEOTIDE SEQUENCE [LARGE SCALE GENOMIC DNA]</scope>
    <source>
        <strain>CVM19633</strain>
    </source>
</reference>
<keyword id="KW-0067">ATP-binding</keyword>
<keyword id="KW-0173">Coenzyme A biosynthesis</keyword>
<keyword id="KW-0963">Cytoplasm</keyword>
<keyword id="KW-0418">Kinase</keyword>
<keyword id="KW-0547">Nucleotide-binding</keyword>
<keyword id="KW-0808">Transferase</keyword>
<proteinExistence type="inferred from homology"/>
<comment type="catalytic activity">
    <reaction evidence="1">
        <text>(R)-pantothenate + ATP = (R)-4'-phosphopantothenate + ADP + H(+)</text>
        <dbReference type="Rhea" id="RHEA:16373"/>
        <dbReference type="ChEBI" id="CHEBI:10986"/>
        <dbReference type="ChEBI" id="CHEBI:15378"/>
        <dbReference type="ChEBI" id="CHEBI:29032"/>
        <dbReference type="ChEBI" id="CHEBI:30616"/>
        <dbReference type="ChEBI" id="CHEBI:456216"/>
        <dbReference type="EC" id="2.7.1.33"/>
    </reaction>
</comment>
<comment type="pathway">
    <text evidence="1">Cofactor biosynthesis; coenzyme A biosynthesis; CoA from (R)-pantothenate: step 1/5.</text>
</comment>
<comment type="subcellular location">
    <subcellularLocation>
        <location evidence="1">Cytoplasm</location>
    </subcellularLocation>
</comment>
<comment type="similarity">
    <text evidence="1">Belongs to the prokaryotic pantothenate kinase family.</text>
</comment>
<accession>B4TQI6</accession>
<dbReference type="EC" id="2.7.1.33" evidence="1"/>
<dbReference type="EMBL" id="CP001127">
    <property type="protein sequence ID" value="ACF88949.1"/>
    <property type="molecule type" value="Genomic_DNA"/>
</dbReference>
<dbReference type="RefSeq" id="WP_000023068.1">
    <property type="nucleotide sequence ID" value="NC_011094.1"/>
</dbReference>
<dbReference type="SMR" id="B4TQI6"/>
<dbReference type="KEGG" id="sew:SeSA_A4350"/>
<dbReference type="HOGENOM" id="CLU_053818_1_1_6"/>
<dbReference type="UniPathway" id="UPA00241">
    <property type="reaction ID" value="UER00352"/>
</dbReference>
<dbReference type="Proteomes" id="UP000001865">
    <property type="component" value="Chromosome"/>
</dbReference>
<dbReference type="GO" id="GO:0005737">
    <property type="term" value="C:cytoplasm"/>
    <property type="evidence" value="ECO:0007669"/>
    <property type="project" value="UniProtKB-SubCell"/>
</dbReference>
<dbReference type="GO" id="GO:0005524">
    <property type="term" value="F:ATP binding"/>
    <property type="evidence" value="ECO:0007669"/>
    <property type="project" value="UniProtKB-UniRule"/>
</dbReference>
<dbReference type="GO" id="GO:0004594">
    <property type="term" value="F:pantothenate kinase activity"/>
    <property type="evidence" value="ECO:0007669"/>
    <property type="project" value="UniProtKB-UniRule"/>
</dbReference>
<dbReference type="GO" id="GO:0015937">
    <property type="term" value="P:coenzyme A biosynthetic process"/>
    <property type="evidence" value="ECO:0007669"/>
    <property type="project" value="UniProtKB-UniRule"/>
</dbReference>
<dbReference type="CDD" id="cd02025">
    <property type="entry name" value="PanK"/>
    <property type="match status" value="1"/>
</dbReference>
<dbReference type="FunFam" id="3.40.50.300:FF:000242">
    <property type="entry name" value="Pantothenate kinase"/>
    <property type="match status" value="1"/>
</dbReference>
<dbReference type="Gene3D" id="3.40.50.300">
    <property type="entry name" value="P-loop containing nucleotide triphosphate hydrolases"/>
    <property type="match status" value="1"/>
</dbReference>
<dbReference type="HAMAP" id="MF_00215">
    <property type="entry name" value="Pantothen_kinase_1"/>
    <property type="match status" value="1"/>
</dbReference>
<dbReference type="InterPro" id="IPR027417">
    <property type="entry name" value="P-loop_NTPase"/>
</dbReference>
<dbReference type="InterPro" id="IPR004566">
    <property type="entry name" value="PanK"/>
</dbReference>
<dbReference type="InterPro" id="IPR006083">
    <property type="entry name" value="PRK/URK"/>
</dbReference>
<dbReference type="NCBIfam" id="TIGR00554">
    <property type="entry name" value="panK_bact"/>
    <property type="match status" value="1"/>
</dbReference>
<dbReference type="PANTHER" id="PTHR10285">
    <property type="entry name" value="URIDINE KINASE"/>
    <property type="match status" value="1"/>
</dbReference>
<dbReference type="Pfam" id="PF00485">
    <property type="entry name" value="PRK"/>
    <property type="match status" value="1"/>
</dbReference>
<dbReference type="PIRSF" id="PIRSF000545">
    <property type="entry name" value="Pantothenate_kin"/>
    <property type="match status" value="1"/>
</dbReference>
<dbReference type="SUPFAM" id="SSF52540">
    <property type="entry name" value="P-loop containing nucleoside triphosphate hydrolases"/>
    <property type="match status" value="1"/>
</dbReference>
<feature type="chain" id="PRO_1000099950" description="Pantothenate kinase">
    <location>
        <begin position="1"/>
        <end position="316"/>
    </location>
</feature>
<feature type="binding site" evidence="1">
    <location>
        <begin position="95"/>
        <end position="102"/>
    </location>
    <ligand>
        <name>ATP</name>
        <dbReference type="ChEBI" id="CHEBI:30616"/>
    </ligand>
</feature>
<sequence length="316" mass="36205">MSIKEQSLMTPYLQFDRSQWAALRDSVPMTLTEDEIAQLKGINEDLSLEEVAEIYLPLSRLLNFYISSNLRRQAVLEQFLGTNGQRIPYIISIAGSVAVGKSTTARVLQALLSRWPEHRRVELITTDGFLHPNQVLKERGLMKKKGFPESYDMHRLVKFVSDLKSGVPNVTAPVYSHLIYDVIPEGDKTVAQPDILILEGLNVLQSGMDYPHDPHHVFVSDFVDFSIYVDAPEELLQTWYINRFLKFREGAFTDPDSYFHNYAKLSKEEAVNTAASLWKEINWLNLKQNILPTRERASLIMTKSANHAVEQVRLRK</sequence>
<name>COAA_SALSV</name>